<feature type="chain" id="PRO_1000075932" description="2-C-methyl-D-erythritol 4-phosphate cytidylyltransferase">
    <location>
        <begin position="1"/>
        <end position="234"/>
    </location>
</feature>
<feature type="site" description="Transition state stabilizer" evidence="1">
    <location>
        <position position="16"/>
    </location>
</feature>
<feature type="site" description="Transition state stabilizer" evidence="1">
    <location>
        <position position="23"/>
    </location>
</feature>
<feature type="site" description="Positions MEP for the nucleophilic attack" evidence="1">
    <location>
        <position position="156"/>
    </location>
</feature>
<feature type="site" description="Positions MEP for the nucleophilic attack" evidence="1">
    <location>
        <position position="212"/>
    </location>
</feature>
<reference key="1">
    <citation type="submission" date="2007-03" db="EMBL/GenBank/DDBJ databases">
        <title>Complete sequence of Desulfotomaculum reducens MI-1.</title>
        <authorList>
            <consortium name="US DOE Joint Genome Institute"/>
            <person name="Copeland A."/>
            <person name="Lucas S."/>
            <person name="Lapidus A."/>
            <person name="Barry K."/>
            <person name="Detter J.C."/>
            <person name="Glavina del Rio T."/>
            <person name="Hammon N."/>
            <person name="Israni S."/>
            <person name="Dalin E."/>
            <person name="Tice H."/>
            <person name="Pitluck S."/>
            <person name="Sims D."/>
            <person name="Brettin T."/>
            <person name="Bruce D."/>
            <person name="Han C."/>
            <person name="Tapia R."/>
            <person name="Schmutz J."/>
            <person name="Larimer F."/>
            <person name="Land M."/>
            <person name="Hauser L."/>
            <person name="Kyrpides N."/>
            <person name="Kim E."/>
            <person name="Tebo B.M."/>
            <person name="Richardson P."/>
        </authorList>
    </citation>
    <scope>NUCLEOTIDE SEQUENCE [LARGE SCALE GENOMIC DNA]</scope>
    <source>
        <strain>ATCC BAA-1160 / DSM 100696 / MI-1</strain>
    </source>
</reference>
<protein>
    <recommendedName>
        <fullName evidence="1">2-C-methyl-D-erythritol 4-phosphate cytidylyltransferase</fullName>
        <ecNumber evidence="1">2.7.7.60</ecNumber>
    </recommendedName>
    <alternativeName>
        <fullName evidence="1">4-diphosphocytidyl-2C-methyl-D-erythritol synthase</fullName>
    </alternativeName>
    <alternativeName>
        <fullName evidence="1">MEP cytidylyltransferase</fullName>
        <shortName evidence="1">MCT</shortName>
    </alternativeName>
</protein>
<dbReference type="EC" id="2.7.7.60" evidence="1"/>
<dbReference type="EMBL" id="CP000612">
    <property type="protein sequence ID" value="ABO48736.1"/>
    <property type="molecule type" value="Genomic_DNA"/>
</dbReference>
<dbReference type="RefSeq" id="WP_011876577.1">
    <property type="nucleotide sequence ID" value="NC_009253.1"/>
</dbReference>
<dbReference type="SMR" id="A4J0Y3"/>
<dbReference type="STRING" id="349161.Dred_0187"/>
<dbReference type="KEGG" id="drm:Dred_0187"/>
<dbReference type="eggNOG" id="COG1211">
    <property type="taxonomic scope" value="Bacteria"/>
</dbReference>
<dbReference type="HOGENOM" id="CLU_061281_2_2_9"/>
<dbReference type="OrthoDB" id="9806837at2"/>
<dbReference type="UniPathway" id="UPA00056">
    <property type="reaction ID" value="UER00093"/>
</dbReference>
<dbReference type="Proteomes" id="UP000001556">
    <property type="component" value="Chromosome"/>
</dbReference>
<dbReference type="GO" id="GO:0050518">
    <property type="term" value="F:2-C-methyl-D-erythritol 4-phosphate cytidylyltransferase activity"/>
    <property type="evidence" value="ECO:0007669"/>
    <property type="project" value="UniProtKB-UniRule"/>
</dbReference>
<dbReference type="GO" id="GO:0019288">
    <property type="term" value="P:isopentenyl diphosphate biosynthetic process, methylerythritol 4-phosphate pathway"/>
    <property type="evidence" value="ECO:0007669"/>
    <property type="project" value="UniProtKB-UniRule"/>
</dbReference>
<dbReference type="CDD" id="cd02516">
    <property type="entry name" value="CDP-ME_synthetase"/>
    <property type="match status" value="1"/>
</dbReference>
<dbReference type="FunFam" id="3.90.550.10:FF:000003">
    <property type="entry name" value="2-C-methyl-D-erythritol 4-phosphate cytidylyltransferase"/>
    <property type="match status" value="1"/>
</dbReference>
<dbReference type="Gene3D" id="3.90.550.10">
    <property type="entry name" value="Spore Coat Polysaccharide Biosynthesis Protein SpsA, Chain A"/>
    <property type="match status" value="1"/>
</dbReference>
<dbReference type="HAMAP" id="MF_00108">
    <property type="entry name" value="IspD"/>
    <property type="match status" value="1"/>
</dbReference>
<dbReference type="InterPro" id="IPR001228">
    <property type="entry name" value="IspD"/>
</dbReference>
<dbReference type="InterPro" id="IPR034683">
    <property type="entry name" value="IspD/TarI"/>
</dbReference>
<dbReference type="InterPro" id="IPR050088">
    <property type="entry name" value="IspD/TarI_cytidylyltransf_bact"/>
</dbReference>
<dbReference type="InterPro" id="IPR018294">
    <property type="entry name" value="ISPD_synthase_CS"/>
</dbReference>
<dbReference type="InterPro" id="IPR029044">
    <property type="entry name" value="Nucleotide-diphossugar_trans"/>
</dbReference>
<dbReference type="NCBIfam" id="TIGR00453">
    <property type="entry name" value="ispD"/>
    <property type="match status" value="1"/>
</dbReference>
<dbReference type="PANTHER" id="PTHR32125">
    <property type="entry name" value="2-C-METHYL-D-ERYTHRITOL 4-PHOSPHATE CYTIDYLYLTRANSFERASE, CHLOROPLASTIC"/>
    <property type="match status" value="1"/>
</dbReference>
<dbReference type="PANTHER" id="PTHR32125:SF4">
    <property type="entry name" value="2-C-METHYL-D-ERYTHRITOL 4-PHOSPHATE CYTIDYLYLTRANSFERASE, CHLOROPLASTIC"/>
    <property type="match status" value="1"/>
</dbReference>
<dbReference type="Pfam" id="PF01128">
    <property type="entry name" value="IspD"/>
    <property type="match status" value="1"/>
</dbReference>
<dbReference type="SUPFAM" id="SSF53448">
    <property type="entry name" value="Nucleotide-diphospho-sugar transferases"/>
    <property type="match status" value="1"/>
</dbReference>
<dbReference type="PROSITE" id="PS01295">
    <property type="entry name" value="ISPD"/>
    <property type="match status" value="1"/>
</dbReference>
<evidence type="ECO:0000255" key="1">
    <source>
        <dbReference type="HAMAP-Rule" id="MF_00108"/>
    </source>
</evidence>
<comment type="function">
    <text evidence="1">Catalyzes the formation of 4-diphosphocytidyl-2-C-methyl-D-erythritol from CTP and 2-C-methyl-D-erythritol 4-phosphate (MEP).</text>
</comment>
<comment type="catalytic activity">
    <reaction evidence="1">
        <text>2-C-methyl-D-erythritol 4-phosphate + CTP + H(+) = 4-CDP-2-C-methyl-D-erythritol + diphosphate</text>
        <dbReference type="Rhea" id="RHEA:13429"/>
        <dbReference type="ChEBI" id="CHEBI:15378"/>
        <dbReference type="ChEBI" id="CHEBI:33019"/>
        <dbReference type="ChEBI" id="CHEBI:37563"/>
        <dbReference type="ChEBI" id="CHEBI:57823"/>
        <dbReference type="ChEBI" id="CHEBI:58262"/>
        <dbReference type="EC" id="2.7.7.60"/>
    </reaction>
</comment>
<comment type="pathway">
    <text evidence="1">Isoprenoid biosynthesis; isopentenyl diphosphate biosynthesis via DXP pathway; isopentenyl diphosphate from 1-deoxy-D-xylulose 5-phosphate: step 2/6.</text>
</comment>
<comment type="similarity">
    <text evidence="1">Belongs to the IspD/TarI cytidylyltransferase family. IspD subfamily.</text>
</comment>
<gene>
    <name evidence="1" type="primary">ispD</name>
    <name type="ordered locus">Dred_0187</name>
</gene>
<keyword id="KW-0414">Isoprene biosynthesis</keyword>
<keyword id="KW-0548">Nucleotidyltransferase</keyword>
<keyword id="KW-1185">Reference proteome</keyword>
<keyword id="KW-0808">Transferase</keyword>
<organism>
    <name type="scientific">Desulforamulus reducens (strain ATCC BAA-1160 / DSM 100696 / MI-1)</name>
    <name type="common">Desulfotomaculum reducens</name>
    <dbReference type="NCBI Taxonomy" id="349161"/>
    <lineage>
        <taxon>Bacteria</taxon>
        <taxon>Bacillati</taxon>
        <taxon>Bacillota</taxon>
        <taxon>Clostridia</taxon>
        <taxon>Eubacteriales</taxon>
        <taxon>Peptococcaceae</taxon>
        <taxon>Desulforamulus</taxon>
    </lineage>
</organism>
<sequence length="234" mass="25658">MGNIVAVIPAAGMGSRMGTEVKKQYLKLQDRPILAHTIDALEQVPDITGIVLVVSPGEETLCQELILKGNLFNKIMAVVPGGDHRQTSVYHGLCSLPGDTELVVIHDGARPLVQRAEISHIIKEARRVGAAALAVPVKDTVKLVNDQGYVIATPNREKLWAVQTPQVFNYELILKAHQDAREKGVYATDDCALVEALGQPVKLVQGSYENIKITTPEDMVMAQAFLKRRNCWCE</sequence>
<proteinExistence type="inferred from homology"/>
<name>ISPD_DESRM</name>
<accession>A4J0Y3</accession>